<name>CYB6_SOLLC</name>
<sequence length="215" mass="24151">MSKVYDWFEERLEIQAIADDITSKYVPPHVNIFYCLGGITLTCFLVQVATGFAMTFYYRPTVTEAFASVQYIMTEANFGWLIRSVHRWSASMMVLMMILHVFRVYLTGGFKKPRELTWVTGVVLAVLTASFGVTGYSLPWDQIGYWAVKIVTGVPDAIPVIGSPLVELLRGSASVGQSTLTRFYSLHTFVLPLLTAVFMLMHFPMIRKQGISGPL</sequence>
<protein>
    <recommendedName>
        <fullName evidence="1">Cytochrome b6</fullName>
    </recommendedName>
</protein>
<dbReference type="EMBL" id="DQ347959">
    <property type="protein sequence ID" value="ABC56329.1"/>
    <property type="molecule type" value="Genomic_DNA"/>
</dbReference>
<dbReference type="EMBL" id="AM087200">
    <property type="protein sequence ID" value="CAJ32424.1"/>
    <property type="molecule type" value="Genomic_DNA"/>
</dbReference>
<dbReference type="RefSeq" id="AP_004958.1">
    <property type="nucleotide sequence ID" value="AC_000188.1"/>
</dbReference>
<dbReference type="RefSeq" id="YP_008563118.1">
    <property type="nucleotide sequence ID" value="NC_007898.3"/>
</dbReference>
<dbReference type="SMR" id="Q2MI71"/>
<dbReference type="FunCoup" id="Q2MI71">
    <property type="interactions" value="355"/>
</dbReference>
<dbReference type="STRING" id="4081.Q2MI71"/>
<dbReference type="PaxDb" id="4081-Solyc01g007530.2.1"/>
<dbReference type="GeneID" id="3950400"/>
<dbReference type="KEGG" id="sly:3950400"/>
<dbReference type="eggNOG" id="KOG4663">
    <property type="taxonomic scope" value="Eukaryota"/>
</dbReference>
<dbReference type="InParanoid" id="Q2MI71"/>
<dbReference type="OrthoDB" id="1246142at2759"/>
<dbReference type="Proteomes" id="UP000004994">
    <property type="component" value="Chloroplast"/>
</dbReference>
<dbReference type="ExpressionAtlas" id="Q2MI71">
    <property type="expression patterns" value="baseline"/>
</dbReference>
<dbReference type="GO" id="GO:0009535">
    <property type="term" value="C:chloroplast thylakoid membrane"/>
    <property type="evidence" value="ECO:0007669"/>
    <property type="project" value="UniProtKB-SubCell"/>
</dbReference>
<dbReference type="GO" id="GO:0016020">
    <property type="term" value="C:membrane"/>
    <property type="evidence" value="ECO:0000318"/>
    <property type="project" value="GO_Central"/>
</dbReference>
<dbReference type="GO" id="GO:0045158">
    <property type="term" value="F:electron transporter, transferring electrons within cytochrome b6/f complex of photosystem II activity"/>
    <property type="evidence" value="ECO:0007669"/>
    <property type="project" value="UniProtKB-UniRule"/>
</dbReference>
<dbReference type="GO" id="GO:0046872">
    <property type="term" value="F:metal ion binding"/>
    <property type="evidence" value="ECO:0007669"/>
    <property type="project" value="UniProtKB-KW"/>
</dbReference>
<dbReference type="GO" id="GO:0016491">
    <property type="term" value="F:oxidoreductase activity"/>
    <property type="evidence" value="ECO:0007669"/>
    <property type="project" value="InterPro"/>
</dbReference>
<dbReference type="GO" id="GO:0015979">
    <property type="term" value="P:photosynthesis"/>
    <property type="evidence" value="ECO:0007669"/>
    <property type="project" value="UniProtKB-UniRule"/>
</dbReference>
<dbReference type="GO" id="GO:0022904">
    <property type="term" value="P:respiratory electron transport chain"/>
    <property type="evidence" value="ECO:0007669"/>
    <property type="project" value="InterPro"/>
</dbReference>
<dbReference type="CDD" id="cd00284">
    <property type="entry name" value="Cytochrome_b_N"/>
    <property type="match status" value="1"/>
</dbReference>
<dbReference type="FunFam" id="1.20.810.10:FF:000001">
    <property type="entry name" value="Cytochrome b6"/>
    <property type="match status" value="1"/>
</dbReference>
<dbReference type="Gene3D" id="1.20.810.10">
    <property type="entry name" value="Cytochrome Bc1 Complex, Chain C"/>
    <property type="match status" value="1"/>
</dbReference>
<dbReference type="HAMAP" id="MF_00633">
    <property type="entry name" value="Cytb6_f_cytb6"/>
    <property type="match status" value="1"/>
</dbReference>
<dbReference type="InterPro" id="IPR005797">
    <property type="entry name" value="Cyt_b/b6_N"/>
</dbReference>
<dbReference type="InterPro" id="IPR023530">
    <property type="entry name" value="Cyt_B6_PetB"/>
</dbReference>
<dbReference type="InterPro" id="IPR027387">
    <property type="entry name" value="Cytb/b6-like_sf"/>
</dbReference>
<dbReference type="InterPro" id="IPR048259">
    <property type="entry name" value="Cytochrome_b_N_euk/bac"/>
</dbReference>
<dbReference type="InterPro" id="IPR016174">
    <property type="entry name" value="Di-haem_cyt_TM"/>
</dbReference>
<dbReference type="NCBIfam" id="NF002990">
    <property type="entry name" value="PRK03735.1"/>
    <property type="match status" value="1"/>
</dbReference>
<dbReference type="PANTHER" id="PTHR19271">
    <property type="entry name" value="CYTOCHROME B"/>
    <property type="match status" value="1"/>
</dbReference>
<dbReference type="PANTHER" id="PTHR19271:SF16">
    <property type="entry name" value="CYTOCHROME B"/>
    <property type="match status" value="1"/>
</dbReference>
<dbReference type="Pfam" id="PF00033">
    <property type="entry name" value="Cytochrome_B"/>
    <property type="match status" value="1"/>
</dbReference>
<dbReference type="PIRSF" id="PIRSF000032">
    <property type="entry name" value="Cytochrome_b6"/>
    <property type="match status" value="1"/>
</dbReference>
<dbReference type="SUPFAM" id="SSF81342">
    <property type="entry name" value="Transmembrane di-heme cytochromes"/>
    <property type="match status" value="1"/>
</dbReference>
<dbReference type="PROSITE" id="PS51002">
    <property type="entry name" value="CYTB_NTER"/>
    <property type="match status" value="1"/>
</dbReference>
<proteinExistence type="inferred from homology"/>
<feature type="chain" id="PRO_0000275335" description="Cytochrome b6">
    <location>
        <begin position="1"/>
        <end position="215"/>
    </location>
</feature>
<feature type="transmembrane region" description="Helical" evidence="1">
    <location>
        <begin position="32"/>
        <end position="52"/>
    </location>
</feature>
<feature type="transmembrane region" description="Helical" evidence="1">
    <location>
        <begin position="90"/>
        <end position="110"/>
    </location>
</feature>
<feature type="transmembrane region" description="Helical" evidence="1">
    <location>
        <begin position="116"/>
        <end position="136"/>
    </location>
</feature>
<feature type="transmembrane region" description="Helical" evidence="1">
    <location>
        <begin position="186"/>
        <end position="206"/>
    </location>
</feature>
<feature type="binding site" description="covalent" evidence="1">
    <location>
        <position position="35"/>
    </location>
    <ligand>
        <name>heme c</name>
        <dbReference type="ChEBI" id="CHEBI:61717"/>
    </ligand>
</feature>
<feature type="binding site" description="axial binding residue" evidence="1">
    <location>
        <position position="86"/>
    </location>
    <ligand>
        <name>heme b</name>
        <dbReference type="ChEBI" id="CHEBI:60344"/>
        <label>2</label>
    </ligand>
    <ligandPart>
        <name>Fe</name>
        <dbReference type="ChEBI" id="CHEBI:18248"/>
    </ligandPart>
</feature>
<feature type="binding site" description="axial binding residue" evidence="1">
    <location>
        <position position="100"/>
    </location>
    <ligand>
        <name>heme b</name>
        <dbReference type="ChEBI" id="CHEBI:60344"/>
        <label>1</label>
    </ligand>
    <ligandPart>
        <name>Fe</name>
        <dbReference type="ChEBI" id="CHEBI:18248"/>
    </ligandPart>
</feature>
<feature type="binding site" description="axial binding residue" evidence="1">
    <location>
        <position position="187"/>
    </location>
    <ligand>
        <name>heme b</name>
        <dbReference type="ChEBI" id="CHEBI:60344"/>
        <label>2</label>
    </ligand>
    <ligandPart>
        <name>Fe</name>
        <dbReference type="ChEBI" id="CHEBI:18248"/>
    </ligandPart>
</feature>
<feature type="binding site" description="axial binding residue" evidence="1">
    <location>
        <position position="202"/>
    </location>
    <ligand>
        <name>heme b</name>
        <dbReference type="ChEBI" id="CHEBI:60344"/>
        <label>1</label>
    </ligand>
    <ligandPart>
        <name>Fe</name>
        <dbReference type="ChEBI" id="CHEBI:18248"/>
    </ligandPart>
</feature>
<keyword id="KW-0150">Chloroplast</keyword>
<keyword id="KW-0249">Electron transport</keyword>
<keyword id="KW-0349">Heme</keyword>
<keyword id="KW-0408">Iron</keyword>
<keyword id="KW-0472">Membrane</keyword>
<keyword id="KW-0479">Metal-binding</keyword>
<keyword id="KW-0602">Photosynthesis</keyword>
<keyword id="KW-0934">Plastid</keyword>
<keyword id="KW-1185">Reference proteome</keyword>
<keyword id="KW-0793">Thylakoid</keyword>
<keyword id="KW-0812">Transmembrane</keyword>
<keyword id="KW-1133">Transmembrane helix</keyword>
<keyword id="KW-0813">Transport</keyword>
<accession>Q2MI71</accession>
<gene>
    <name evidence="1" type="primary">petB</name>
</gene>
<reference key="1">
    <citation type="journal article" date="2006" name="Theor. Appl. Genet.">
        <title>Complete chloroplast genome sequences of Solanum bulbocastanum, Solanum lycopersicum and comparative analyses with other Solanaceae genomes.</title>
        <authorList>
            <person name="Daniell H."/>
            <person name="Lee S.-B."/>
            <person name="Grevich J."/>
            <person name="Saski C."/>
            <person name="Quesada-Vargas T."/>
            <person name="Guda C."/>
            <person name="Tomkins J."/>
            <person name="Jansen R.K."/>
        </authorList>
    </citation>
    <scope>NUCLEOTIDE SEQUENCE [LARGE SCALE GENOMIC DNA]</scope>
    <source>
        <strain>cv. LA3023</strain>
    </source>
</reference>
<reference key="2">
    <citation type="journal article" date="2006" name="J. Mol. Evol.">
        <title>Sequence of the tomato chloroplast DNA and evolutionary comparison of solanaceous plastid genomes.</title>
        <authorList>
            <person name="Kahlau S."/>
            <person name="Aspinall S."/>
            <person name="Gray J.C."/>
            <person name="Bock R."/>
        </authorList>
    </citation>
    <scope>NUCLEOTIDE SEQUENCE [LARGE SCALE GENOMIC DNA]</scope>
    <source>
        <strain>cv. IPA-6</strain>
    </source>
</reference>
<organism>
    <name type="scientific">Solanum lycopersicum</name>
    <name type="common">Tomato</name>
    <name type="synonym">Lycopersicon esculentum</name>
    <dbReference type="NCBI Taxonomy" id="4081"/>
    <lineage>
        <taxon>Eukaryota</taxon>
        <taxon>Viridiplantae</taxon>
        <taxon>Streptophyta</taxon>
        <taxon>Embryophyta</taxon>
        <taxon>Tracheophyta</taxon>
        <taxon>Spermatophyta</taxon>
        <taxon>Magnoliopsida</taxon>
        <taxon>eudicotyledons</taxon>
        <taxon>Gunneridae</taxon>
        <taxon>Pentapetalae</taxon>
        <taxon>asterids</taxon>
        <taxon>lamiids</taxon>
        <taxon>Solanales</taxon>
        <taxon>Solanaceae</taxon>
        <taxon>Solanoideae</taxon>
        <taxon>Solaneae</taxon>
        <taxon>Solanum</taxon>
        <taxon>Solanum subgen. Lycopersicon</taxon>
    </lineage>
</organism>
<geneLocation type="chloroplast"/>
<comment type="function">
    <text evidence="1">Component of the cytochrome b6-f complex, which mediates electron transfer between photosystem II (PSII) and photosystem I (PSI), cyclic electron flow around PSI, and state transitions.</text>
</comment>
<comment type="cofactor">
    <cofactor evidence="1">
        <name>heme b</name>
        <dbReference type="ChEBI" id="CHEBI:60344"/>
    </cofactor>
    <text evidence="1">Binds 2 heme b groups non-covalently with two histidine residues as axial ligands.</text>
</comment>
<comment type="cofactor">
    <cofactor evidence="1">
        <name>heme c</name>
        <dbReference type="ChEBI" id="CHEBI:61717"/>
    </cofactor>
    <text evidence="1">Binds one heme group covalently by a single cysteine link with no axial amino acid ligand. This heme was named heme ci.</text>
</comment>
<comment type="subunit">
    <text evidence="1">The 4 large subunits of the cytochrome b6-f complex are cytochrome b6, subunit IV (17 kDa polypeptide, PetD), cytochrome f and the Rieske protein, while the 4 small subunits are PetG, PetL, PetM and PetN. The complex functions as a dimer.</text>
</comment>
<comment type="subcellular location">
    <subcellularLocation>
        <location evidence="1">Plastid</location>
        <location evidence="1">Chloroplast thylakoid membrane</location>
        <topology evidence="1">Multi-pass membrane protein</topology>
    </subcellularLocation>
</comment>
<comment type="miscellaneous">
    <text evidence="1">Heme 1 (or BH or b566) is high-potential and absorbs at about 566 nm, and heme 2 (or BL or b562) is low-potential and absorbs at about 562 nm.</text>
</comment>
<comment type="similarity">
    <text evidence="1">Belongs to the cytochrome b family. PetB subfamily.</text>
</comment>
<evidence type="ECO:0000255" key="1">
    <source>
        <dbReference type="HAMAP-Rule" id="MF_00633"/>
    </source>
</evidence>